<accession>Q04W28</accession>
<proteinExistence type="inferred from homology"/>
<organism>
    <name type="scientific">Leptospira borgpetersenii serovar Hardjo-bovis (strain JB197)</name>
    <dbReference type="NCBI Taxonomy" id="355277"/>
    <lineage>
        <taxon>Bacteria</taxon>
        <taxon>Pseudomonadati</taxon>
        <taxon>Spirochaetota</taxon>
        <taxon>Spirochaetia</taxon>
        <taxon>Leptospirales</taxon>
        <taxon>Leptospiraceae</taxon>
        <taxon>Leptospira</taxon>
    </lineage>
</organism>
<sequence>MNDTIAAVSTASGPGAIGIIRMSGPGALSISSSFLFSKNGFLSPSDIQPRIAIQCVFQIGDRKIDQILFFYFKTPNSYTGEDLCEFHFHGNPILLREALDAIFRAGARPAKQGEFSRRAFLNGKLDLTGVEAIGRLISARSRFELELAQKNVFGEVSRLTSNLRSQLISLKAECEAEIDFSTEDLTYESLEERKVRIEGVKTFCQTVIAKSNSAEKVIQQLRIVLYGEPNTGKSSLMNVLLGKDRSIISEIPGTTRDYISEEILLEGIPVRLVDTAGVRETEDHIERLGIERSEKEFQSADIRLFLIDVSKKEEWKKFIAKAKGRLEGSILVANKIDIRDSSWNPNLFSDVKDLIICEISCKTKEGIPILLDEIQKKAATMGHVEDYVLLEERQRYHFETIVRCLDKTLRLIEEGAPAEIYIQEMNYALSEIGEVNGRVDTEEVLGRIFSKFCIGK</sequence>
<comment type="function">
    <text evidence="1">Exhibits a very high intrinsic GTPase hydrolysis rate. Involved in the addition of a carboxymethylaminomethyl (cmnm) group at the wobble position (U34) of certain tRNAs, forming tRNA-cmnm(5)s(2)U34.</text>
</comment>
<comment type="cofactor">
    <cofactor evidence="1">
        <name>K(+)</name>
        <dbReference type="ChEBI" id="CHEBI:29103"/>
    </cofactor>
    <text evidence="1">Binds 1 potassium ion per subunit.</text>
</comment>
<comment type="subunit">
    <text evidence="1">Homodimer. Heterotetramer of two MnmE and two MnmG subunits.</text>
</comment>
<comment type="subcellular location">
    <subcellularLocation>
        <location evidence="1">Cytoplasm</location>
    </subcellularLocation>
</comment>
<comment type="similarity">
    <text evidence="1">Belongs to the TRAFAC class TrmE-Era-EngA-EngB-Septin-like GTPase superfamily. TrmE GTPase family.</text>
</comment>
<name>MNME_LEPBJ</name>
<keyword id="KW-0963">Cytoplasm</keyword>
<keyword id="KW-0342">GTP-binding</keyword>
<keyword id="KW-0378">Hydrolase</keyword>
<keyword id="KW-0460">Magnesium</keyword>
<keyword id="KW-0479">Metal-binding</keyword>
<keyword id="KW-0547">Nucleotide-binding</keyword>
<keyword id="KW-0630">Potassium</keyword>
<keyword id="KW-0819">tRNA processing</keyword>
<reference key="1">
    <citation type="journal article" date="2006" name="Proc. Natl. Acad. Sci. U.S.A.">
        <title>Genome reduction in Leptospira borgpetersenii reflects limited transmission potential.</title>
        <authorList>
            <person name="Bulach D.M."/>
            <person name="Zuerner R.L."/>
            <person name="Wilson P."/>
            <person name="Seemann T."/>
            <person name="McGrath A."/>
            <person name="Cullen P.A."/>
            <person name="Davis J."/>
            <person name="Johnson M."/>
            <person name="Kuczek E."/>
            <person name="Alt D.P."/>
            <person name="Peterson-Burch B."/>
            <person name="Coppel R.L."/>
            <person name="Rood J.I."/>
            <person name="Davies J.K."/>
            <person name="Adler B."/>
        </authorList>
    </citation>
    <scope>NUCLEOTIDE SEQUENCE [LARGE SCALE GENOMIC DNA]</scope>
    <source>
        <strain>JB197</strain>
    </source>
</reference>
<feature type="chain" id="PRO_1000048837" description="tRNA modification GTPase MnmE">
    <location>
        <begin position="1"/>
        <end position="456"/>
    </location>
</feature>
<feature type="domain" description="TrmE-type G">
    <location>
        <begin position="220"/>
        <end position="379"/>
    </location>
</feature>
<feature type="binding site" evidence="1">
    <location>
        <position position="21"/>
    </location>
    <ligand>
        <name>(6S)-5-formyl-5,6,7,8-tetrahydrofolate</name>
        <dbReference type="ChEBI" id="CHEBI:57457"/>
    </ligand>
</feature>
<feature type="binding site" evidence="1">
    <location>
        <position position="85"/>
    </location>
    <ligand>
        <name>(6S)-5-formyl-5,6,7,8-tetrahydrofolate</name>
        <dbReference type="ChEBI" id="CHEBI:57457"/>
    </ligand>
</feature>
<feature type="binding site" evidence="1">
    <location>
        <position position="124"/>
    </location>
    <ligand>
        <name>(6S)-5-formyl-5,6,7,8-tetrahydrofolate</name>
        <dbReference type="ChEBI" id="CHEBI:57457"/>
    </ligand>
</feature>
<feature type="binding site" evidence="1">
    <location>
        <begin position="230"/>
        <end position="235"/>
    </location>
    <ligand>
        <name>GTP</name>
        <dbReference type="ChEBI" id="CHEBI:37565"/>
    </ligand>
</feature>
<feature type="binding site" evidence="1">
    <location>
        <position position="230"/>
    </location>
    <ligand>
        <name>K(+)</name>
        <dbReference type="ChEBI" id="CHEBI:29103"/>
    </ligand>
</feature>
<feature type="binding site" evidence="1">
    <location>
        <position position="234"/>
    </location>
    <ligand>
        <name>Mg(2+)</name>
        <dbReference type="ChEBI" id="CHEBI:18420"/>
    </ligand>
</feature>
<feature type="binding site" evidence="1">
    <location>
        <begin position="249"/>
        <end position="255"/>
    </location>
    <ligand>
        <name>GTP</name>
        <dbReference type="ChEBI" id="CHEBI:37565"/>
    </ligand>
</feature>
<feature type="binding site" evidence="1">
    <location>
        <position position="249"/>
    </location>
    <ligand>
        <name>K(+)</name>
        <dbReference type="ChEBI" id="CHEBI:29103"/>
    </ligand>
</feature>
<feature type="binding site" evidence="1">
    <location>
        <position position="251"/>
    </location>
    <ligand>
        <name>K(+)</name>
        <dbReference type="ChEBI" id="CHEBI:29103"/>
    </ligand>
</feature>
<feature type="binding site" evidence="1">
    <location>
        <position position="254"/>
    </location>
    <ligand>
        <name>K(+)</name>
        <dbReference type="ChEBI" id="CHEBI:29103"/>
    </ligand>
</feature>
<feature type="binding site" evidence="1">
    <location>
        <position position="255"/>
    </location>
    <ligand>
        <name>Mg(2+)</name>
        <dbReference type="ChEBI" id="CHEBI:18420"/>
    </ligand>
</feature>
<feature type="binding site" evidence="1">
    <location>
        <begin position="274"/>
        <end position="277"/>
    </location>
    <ligand>
        <name>GTP</name>
        <dbReference type="ChEBI" id="CHEBI:37565"/>
    </ligand>
</feature>
<feature type="binding site" evidence="1">
    <location>
        <position position="456"/>
    </location>
    <ligand>
        <name>(6S)-5-formyl-5,6,7,8-tetrahydrofolate</name>
        <dbReference type="ChEBI" id="CHEBI:57457"/>
    </ligand>
</feature>
<evidence type="ECO:0000255" key="1">
    <source>
        <dbReference type="HAMAP-Rule" id="MF_00379"/>
    </source>
</evidence>
<gene>
    <name evidence="1" type="primary">mnmE</name>
    <name evidence="1" type="synonym">trmE</name>
    <name type="ordered locus">LBJ_0149</name>
</gene>
<dbReference type="EC" id="3.6.-.-" evidence="1"/>
<dbReference type="EMBL" id="CP000350">
    <property type="protein sequence ID" value="ABJ74892.1"/>
    <property type="molecule type" value="Genomic_DNA"/>
</dbReference>
<dbReference type="RefSeq" id="WP_011671158.1">
    <property type="nucleotide sequence ID" value="NC_008510.1"/>
</dbReference>
<dbReference type="SMR" id="Q04W28"/>
<dbReference type="KEGG" id="lbj:LBJ_0149"/>
<dbReference type="HOGENOM" id="CLU_019624_4_1_12"/>
<dbReference type="Proteomes" id="UP000000656">
    <property type="component" value="Chromosome 1"/>
</dbReference>
<dbReference type="GO" id="GO:0005829">
    <property type="term" value="C:cytosol"/>
    <property type="evidence" value="ECO:0007669"/>
    <property type="project" value="TreeGrafter"/>
</dbReference>
<dbReference type="GO" id="GO:0005525">
    <property type="term" value="F:GTP binding"/>
    <property type="evidence" value="ECO:0007669"/>
    <property type="project" value="UniProtKB-UniRule"/>
</dbReference>
<dbReference type="GO" id="GO:0003924">
    <property type="term" value="F:GTPase activity"/>
    <property type="evidence" value="ECO:0007669"/>
    <property type="project" value="UniProtKB-UniRule"/>
</dbReference>
<dbReference type="GO" id="GO:0046872">
    <property type="term" value="F:metal ion binding"/>
    <property type="evidence" value="ECO:0007669"/>
    <property type="project" value="UniProtKB-KW"/>
</dbReference>
<dbReference type="GO" id="GO:0030488">
    <property type="term" value="P:tRNA methylation"/>
    <property type="evidence" value="ECO:0007669"/>
    <property type="project" value="TreeGrafter"/>
</dbReference>
<dbReference type="GO" id="GO:0002098">
    <property type="term" value="P:tRNA wobble uridine modification"/>
    <property type="evidence" value="ECO:0007669"/>
    <property type="project" value="TreeGrafter"/>
</dbReference>
<dbReference type="CDD" id="cd04164">
    <property type="entry name" value="trmE"/>
    <property type="match status" value="1"/>
</dbReference>
<dbReference type="CDD" id="cd14858">
    <property type="entry name" value="TrmE_N"/>
    <property type="match status" value="1"/>
</dbReference>
<dbReference type="FunFam" id="3.40.50.300:FF:001376">
    <property type="entry name" value="tRNA modification GTPase MnmE"/>
    <property type="match status" value="1"/>
</dbReference>
<dbReference type="Gene3D" id="3.40.50.300">
    <property type="entry name" value="P-loop containing nucleotide triphosphate hydrolases"/>
    <property type="match status" value="1"/>
</dbReference>
<dbReference type="Gene3D" id="3.30.1360.120">
    <property type="entry name" value="Probable tRNA modification gtpase trme, domain 1"/>
    <property type="match status" value="1"/>
</dbReference>
<dbReference type="Gene3D" id="1.20.120.430">
    <property type="entry name" value="tRNA modification GTPase MnmE domain 2"/>
    <property type="match status" value="1"/>
</dbReference>
<dbReference type="HAMAP" id="MF_00379">
    <property type="entry name" value="GTPase_MnmE"/>
    <property type="match status" value="1"/>
</dbReference>
<dbReference type="InterPro" id="IPR031168">
    <property type="entry name" value="G_TrmE"/>
</dbReference>
<dbReference type="InterPro" id="IPR006073">
    <property type="entry name" value="GTP-bd"/>
</dbReference>
<dbReference type="InterPro" id="IPR018948">
    <property type="entry name" value="GTP-bd_TrmE_N"/>
</dbReference>
<dbReference type="InterPro" id="IPR004520">
    <property type="entry name" value="GTPase_MnmE"/>
</dbReference>
<dbReference type="InterPro" id="IPR027368">
    <property type="entry name" value="MnmE_dom2"/>
</dbReference>
<dbReference type="InterPro" id="IPR025867">
    <property type="entry name" value="MnmE_helical"/>
</dbReference>
<dbReference type="InterPro" id="IPR027417">
    <property type="entry name" value="P-loop_NTPase"/>
</dbReference>
<dbReference type="InterPro" id="IPR005225">
    <property type="entry name" value="Small_GTP-bd"/>
</dbReference>
<dbReference type="InterPro" id="IPR027266">
    <property type="entry name" value="TrmE/GcvT_dom1"/>
</dbReference>
<dbReference type="NCBIfam" id="TIGR00450">
    <property type="entry name" value="mnmE_trmE_thdF"/>
    <property type="match status" value="1"/>
</dbReference>
<dbReference type="NCBIfam" id="TIGR00231">
    <property type="entry name" value="small_GTP"/>
    <property type="match status" value="1"/>
</dbReference>
<dbReference type="PANTHER" id="PTHR42714">
    <property type="entry name" value="TRNA MODIFICATION GTPASE GTPBP3"/>
    <property type="match status" value="1"/>
</dbReference>
<dbReference type="PANTHER" id="PTHR42714:SF2">
    <property type="entry name" value="TRNA MODIFICATION GTPASE GTPBP3, MITOCHONDRIAL"/>
    <property type="match status" value="1"/>
</dbReference>
<dbReference type="Pfam" id="PF01926">
    <property type="entry name" value="MMR_HSR1"/>
    <property type="match status" value="1"/>
</dbReference>
<dbReference type="Pfam" id="PF12631">
    <property type="entry name" value="MnmE_helical"/>
    <property type="match status" value="1"/>
</dbReference>
<dbReference type="Pfam" id="PF10396">
    <property type="entry name" value="TrmE_N"/>
    <property type="match status" value="1"/>
</dbReference>
<dbReference type="SUPFAM" id="SSF52540">
    <property type="entry name" value="P-loop containing nucleoside triphosphate hydrolases"/>
    <property type="match status" value="1"/>
</dbReference>
<dbReference type="PROSITE" id="PS51709">
    <property type="entry name" value="G_TRME"/>
    <property type="match status" value="1"/>
</dbReference>
<protein>
    <recommendedName>
        <fullName evidence="1">tRNA modification GTPase MnmE</fullName>
        <ecNumber evidence="1">3.6.-.-</ecNumber>
    </recommendedName>
</protein>